<gene>
    <name evidence="1" type="primary">pgi</name>
    <name type="ordered locus">SG4063</name>
</gene>
<sequence>MKNINPTQTSAWQALQKHYDEMKDVTIAELFANDSDRFAKFSATFDDLMLVDFSKNRITEETLAKLQDLAKLQDLAGAIKSMFSGEKINRTEDRAVLHVALRNRSNTPIIVDGKDVMPEVNAVLEKMKTFSQAIISGQWKGYTGKAITDVVNIGIGGSDLGPFMVTEALRPYKNHLTMHFVSNVDGTHIAEVLKKVNPETTLFLVASKTFTTQETMTNAHSARDWFLKTAGDEKHVAKHFAALSTNAKAVGEFGIDTANMFEFWDWVGGRYSLWSAIGLSIILSVGFDNFVELLSGAHAMDKHFSTTPAEKNLPILLALIGIWYNNFFGAETEAILPYDQYMHRFAAYFQQGNMESNGKYVDRNGNAVDYQTGPIIWGEPGTNGQHAFYQLIHQGTKMVPCDFIAPAITHNPLSDHHQKLLSNFFAQTEALAFGKSREVVEQEYRDQGKDPAQLEHVVPFKVFEGNRPTNSILLREITPFSLGALIALYEHKIFTQGAILNIFTFDQWGVELGKQLANRILPELGDDKAISSHDSSTNGLINRYKAWRA</sequence>
<evidence type="ECO:0000255" key="1">
    <source>
        <dbReference type="HAMAP-Rule" id="MF_00473"/>
    </source>
</evidence>
<feature type="chain" id="PRO_1000125753" description="Glucose-6-phosphate isomerase">
    <location>
        <begin position="1"/>
        <end position="549"/>
    </location>
</feature>
<feature type="active site" description="Proton donor" evidence="1">
    <location>
        <position position="355"/>
    </location>
</feature>
<feature type="active site" evidence="1">
    <location>
        <position position="386"/>
    </location>
</feature>
<feature type="active site" evidence="1">
    <location>
        <position position="514"/>
    </location>
</feature>
<name>G6PI_SALG2</name>
<proteinExistence type="inferred from homology"/>
<organism>
    <name type="scientific">Salmonella gallinarum (strain 287/91 / NCTC 13346)</name>
    <dbReference type="NCBI Taxonomy" id="550538"/>
    <lineage>
        <taxon>Bacteria</taxon>
        <taxon>Pseudomonadati</taxon>
        <taxon>Pseudomonadota</taxon>
        <taxon>Gammaproteobacteria</taxon>
        <taxon>Enterobacterales</taxon>
        <taxon>Enterobacteriaceae</taxon>
        <taxon>Salmonella</taxon>
    </lineage>
</organism>
<comment type="function">
    <text evidence="1">Catalyzes the reversible isomerization of glucose-6-phosphate to fructose-6-phosphate.</text>
</comment>
<comment type="catalytic activity">
    <reaction evidence="1">
        <text>alpha-D-glucose 6-phosphate = beta-D-fructose 6-phosphate</text>
        <dbReference type="Rhea" id="RHEA:11816"/>
        <dbReference type="ChEBI" id="CHEBI:57634"/>
        <dbReference type="ChEBI" id="CHEBI:58225"/>
        <dbReference type="EC" id="5.3.1.9"/>
    </reaction>
</comment>
<comment type="pathway">
    <text evidence="1">Carbohydrate biosynthesis; gluconeogenesis.</text>
</comment>
<comment type="pathway">
    <text evidence="1">Carbohydrate degradation; glycolysis; D-glyceraldehyde 3-phosphate and glycerone phosphate from D-glucose: step 2/4.</text>
</comment>
<comment type="subcellular location">
    <subcellularLocation>
        <location evidence="1">Cytoplasm</location>
    </subcellularLocation>
</comment>
<comment type="similarity">
    <text evidence="1">Belongs to the GPI family.</text>
</comment>
<dbReference type="EC" id="5.3.1.9" evidence="1"/>
<dbReference type="EMBL" id="AM933173">
    <property type="protein sequence ID" value="CAR39833.1"/>
    <property type="molecule type" value="Genomic_DNA"/>
</dbReference>
<dbReference type="RefSeq" id="WP_000790043.1">
    <property type="nucleotide sequence ID" value="NC_011274.1"/>
</dbReference>
<dbReference type="SMR" id="B5R7S0"/>
<dbReference type="KEGG" id="seg:SG4063"/>
<dbReference type="HOGENOM" id="CLU_017947_3_1_6"/>
<dbReference type="UniPathway" id="UPA00109">
    <property type="reaction ID" value="UER00181"/>
</dbReference>
<dbReference type="UniPathway" id="UPA00138"/>
<dbReference type="Proteomes" id="UP000008321">
    <property type="component" value="Chromosome"/>
</dbReference>
<dbReference type="GO" id="GO:0005829">
    <property type="term" value="C:cytosol"/>
    <property type="evidence" value="ECO:0007669"/>
    <property type="project" value="TreeGrafter"/>
</dbReference>
<dbReference type="GO" id="GO:0097367">
    <property type="term" value="F:carbohydrate derivative binding"/>
    <property type="evidence" value="ECO:0007669"/>
    <property type="project" value="InterPro"/>
</dbReference>
<dbReference type="GO" id="GO:0004347">
    <property type="term" value="F:glucose-6-phosphate isomerase activity"/>
    <property type="evidence" value="ECO:0007669"/>
    <property type="project" value="UniProtKB-UniRule"/>
</dbReference>
<dbReference type="GO" id="GO:0048029">
    <property type="term" value="F:monosaccharide binding"/>
    <property type="evidence" value="ECO:0007669"/>
    <property type="project" value="TreeGrafter"/>
</dbReference>
<dbReference type="GO" id="GO:0006094">
    <property type="term" value="P:gluconeogenesis"/>
    <property type="evidence" value="ECO:0007669"/>
    <property type="project" value="UniProtKB-UniRule"/>
</dbReference>
<dbReference type="GO" id="GO:0051156">
    <property type="term" value="P:glucose 6-phosphate metabolic process"/>
    <property type="evidence" value="ECO:0007669"/>
    <property type="project" value="TreeGrafter"/>
</dbReference>
<dbReference type="GO" id="GO:0006096">
    <property type="term" value="P:glycolytic process"/>
    <property type="evidence" value="ECO:0007669"/>
    <property type="project" value="UniProtKB-UniRule"/>
</dbReference>
<dbReference type="CDD" id="cd05015">
    <property type="entry name" value="SIS_PGI_1"/>
    <property type="match status" value="1"/>
</dbReference>
<dbReference type="CDD" id="cd05016">
    <property type="entry name" value="SIS_PGI_2"/>
    <property type="match status" value="1"/>
</dbReference>
<dbReference type="FunFam" id="1.10.1390.10:FF:000001">
    <property type="entry name" value="Glucose-6-phosphate isomerase"/>
    <property type="match status" value="1"/>
</dbReference>
<dbReference type="FunFam" id="3.40.50.10490:FF:000004">
    <property type="entry name" value="Glucose-6-phosphate isomerase"/>
    <property type="match status" value="1"/>
</dbReference>
<dbReference type="Gene3D" id="1.10.1390.10">
    <property type="match status" value="1"/>
</dbReference>
<dbReference type="Gene3D" id="3.40.50.10490">
    <property type="entry name" value="Glucose-6-phosphate isomerase like protein, domain 1"/>
    <property type="match status" value="2"/>
</dbReference>
<dbReference type="HAMAP" id="MF_00473">
    <property type="entry name" value="G6P_isomerase"/>
    <property type="match status" value="1"/>
</dbReference>
<dbReference type="InterPro" id="IPR001672">
    <property type="entry name" value="G6P_Isomerase"/>
</dbReference>
<dbReference type="InterPro" id="IPR023096">
    <property type="entry name" value="G6P_Isomerase_C"/>
</dbReference>
<dbReference type="InterPro" id="IPR018189">
    <property type="entry name" value="Phosphoglucose_isomerase_CS"/>
</dbReference>
<dbReference type="InterPro" id="IPR046348">
    <property type="entry name" value="SIS_dom_sf"/>
</dbReference>
<dbReference type="InterPro" id="IPR035476">
    <property type="entry name" value="SIS_PGI_1"/>
</dbReference>
<dbReference type="InterPro" id="IPR035482">
    <property type="entry name" value="SIS_PGI_2"/>
</dbReference>
<dbReference type="NCBIfam" id="NF001211">
    <property type="entry name" value="PRK00179.1"/>
    <property type="match status" value="1"/>
</dbReference>
<dbReference type="PANTHER" id="PTHR11469">
    <property type="entry name" value="GLUCOSE-6-PHOSPHATE ISOMERASE"/>
    <property type="match status" value="1"/>
</dbReference>
<dbReference type="PANTHER" id="PTHR11469:SF1">
    <property type="entry name" value="GLUCOSE-6-PHOSPHATE ISOMERASE"/>
    <property type="match status" value="1"/>
</dbReference>
<dbReference type="Pfam" id="PF00342">
    <property type="entry name" value="PGI"/>
    <property type="match status" value="1"/>
</dbReference>
<dbReference type="PRINTS" id="PR00662">
    <property type="entry name" value="G6PISOMERASE"/>
</dbReference>
<dbReference type="SUPFAM" id="SSF53697">
    <property type="entry name" value="SIS domain"/>
    <property type="match status" value="1"/>
</dbReference>
<dbReference type="PROSITE" id="PS00765">
    <property type="entry name" value="P_GLUCOSE_ISOMERASE_1"/>
    <property type="match status" value="1"/>
</dbReference>
<dbReference type="PROSITE" id="PS00174">
    <property type="entry name" value="P_GLUCOSE_ISOMERASE_2"/>
    <property type="match status" value="1"/>
</dbReference>
<dbReference type="PROSITE" id="PS51463">
    <property type="entry name" value="P_GLUCOSE_ISOMERASE_3"/>
    <property type="match status" value="1"/>
</dbReference>
<keyword id="KW-0963">Cytoplasm</keyword>
<keyword id="KW-0312">Gluconeogenesis</keyword>
<keyword id="KW-0324">Glycolysis</keyword>
<keyword id="KW-0413">Isomerase</keyword>
<reference key="1">
    <citation type="journal article" date="2008" name="Genome Res.">
        <title>Comparative genome analysis of Salmonella enteritidis PT4 and Salmonella gallinarum 287/91 provides insights into evolutionary and host adaptation pathways.</title>
        <authorList>
            <person name="Thomson N.R."/>
            <person name="Clayton D.J."/>
            <person name="Windhorst D."/>
            <person name="Vernikos G."/>
            <person name="Davidson S."/>
            <person name="Churcher C."/>
            <person name="Quail M.A."/>
            <person name="Stevens M."/>
            <person name="Jones M.A."/>
            <person name="Watson M."/>
            <person name="Barron A."/>
            <person name="Layton A."/>
            <person name="Pickard D."/>
            <person name="Kingsley R.A."/>
            <person name="Bignell A."/>
            <person name="Clark L."/>
            <person name="Harris B."/>
            <person name="Ormond D."/>
            <person name="Abdellah Z."/>
            <person name="Brooks K."/>
            <person name="Cherevach I."/>
            <person name="Chillingworth T."/>
            <person name="Woodward J."/>
            <person name="Norberczak H."/>
            <person name="Lord A."/>
            <person name="Arrowsmith C."/>
            <person name="Jagels K."/>
            <person name="Moule S."/>
            <person name="Mungall K."/>
            <person name="Saunders M."/>
            <person name="Whitehead S."/>
            <person name="Chabalgoity J.A."/>
            <person name="Maskell D."/>
            <person name="Humphreys T."/>
            <person name="Roberts M."/>
            <person name="Barrow P.A."/>
            <person name="Dougan G."/>
            <person name="Parkhill J."/>
        </authorList>
    </citation>
    <scope>NUCLEOTIDE SEQUENCE [LARGE SCALE GENOMIC DNA]</scope>
    <source>
        <strain>287/91 / NCTC 13346</strain>
    </source>
</reference>
<accession>B5R7S0</accession>
<protein>
    <recommendedName>
        <fullName evidence="1">Glucose-6-phosphate isomerase</fullName>
        <shortName evidence="1">GPI</shortName>
        <ecNumber evidence="1">5.3.1.9</ecNumber>
    </recommendedName>
    <alternativeName>
        <fullName evidence="1">Phosphoglucose isomerase</fullName>
        <shortName evidence="1">PGI</shortName>
    </alternativeName>
    <alternativeName>
        <fullName evidence="1">Phosphohexose isomerase</fullName>
        <shortName evidence="1">PHI</shortName>
    </alternativeName>
</protein>